<gene>
    <name evidence="1" type="primary">pepA</name>
    <name type="ordered locus">ECIAI1_4491</name>
</gene>
<feature type="chain" id="PRO_1000118454" description="Probable cytosol aminopeptidase">
    <location>
        <begin position="1"/>
        <end position="503"/>
    </location>
</feature>
<feature type="active site" evidence="1">
    <location>
        <position position="282"/>
    </location>
</feature>
<feature type="active site" evidence="1">
    <location>
        <position position="356"/>
    </location>
</feature>
<feature type="binding site" evidence="1">
    <location>
        <position position="270"/>
    </location>
    <ligand>
        <name>Mn(2+)</name>
        <dbReference type="ChEBI" id="CHEBI:29035"/>
        <label>2</label>
    </ligand>
</feature>
<feature type="binding site" evidence="1">
    <location>
        <position position="275"/>
    </location>
    <ligand>
        <name>Mn(2+)</name>
        <dbReference type="ChEBI" id="CHEBI:29035"/>
        <label>1</label>
    </ligand>
</feature>
<feature type="binding site" evidence="1">
    <location>
        <position position="275"/>
    </location>
    <ligand>
        <name>Mn(2+)</name>
        <dbReference type="ChEBI" id="CHEBI:29035"/>
        <label>2</label>
    </ligand>
</feature>
<feature type="binding site" evidence="1">
    <location>
        <position position="293"/>
    </location>
    <ligand>
        <name>Mn(2+)</name>
        <dbReference type="ChEBI" id="CHEBI:29035"/>
        <label>2</label>
    </ligand>
</feature>
<feature type="binding site" evidence="1">
    <location>
        <position position="352"/>
    </location>
    <ligand>
        <name>Mn(2+)</name>
        <dbReference type="ChEBI" id="CHEBI:29035"/>
        <label>1</label>
    </ligand>
</feature>
<feature type="binding site" evidence="1">
    <location>
        <position position="354"/>
    </location>
    <ligand>
        <name>Mn(2+)</name>
        <dbReference type="ChEBI" id="CHEBI:29035"/>
        <label>1</label>
    </ligand>
</feature>
<feature type="binding site" evidence="1">
    <location>
        <position position="354"/>
    </location>
    <ligand>
        <name>Mn(2+)</name>
        <dbReference type="ChEBI" id="CHEBI:29035"/>
        <label>2</label>
    </ligand>
</feature>
<dbReference type="EC" id="3.4.11.1" evidence="1"/>
<dbReference type="EC" id="3.4.11.10" evidence="1"/>
<dbReference type="EMBL" id="CU928160">
    <property type="protein sequence ID" value="CAR01233.1"/>
    <property type="molecule type" value="Genomic_DNA"/>
</dbReference>
<dbReference type="RefSeq" id="WP_000397144.1">
    <property type="nucleotide sequence ID" value="NC_011741.1"/>
</dbReference>
<dbReference type="SMR" id="B7M9L9"/>
<dbReference type="MEROPS" id="M17.003"/>
<dbReference type="GeneID" id="93777558"/>
<dbReference type="KEGG" id="ecr:ECIAI1_4491"/>
<dbReference type="HOGENOM" id="CLU_013734_2_2_6"/>
<dbReference type="GO" id="GO:0005737">
    <property type="term" value="C:cytoplasm"/>
    <property type="evidence" value="ECO:0007669"/>
    <property type="project" value="UniProtKB-SubCell"/>
</dbReference>
<dbReference type="GO" id="GO:0030145">
    <property type="term" value="F:manganese ion binding"/>
    <property type="evidence" value="ECO:0007669"/>
    <property type="project" value="UniProtKB-UniRule"/>
</dbReference>
<dbReference type="GO" id="GO:0070006">
    <property type="term" value="F:metalloaminopeptidase activity"/>
    <property type="evidence" value="ECO:0007669"/>
    <property type="project" value="InterPro"/>
</dbReference>
<dbReference type="GO" id="GO:0006508">
    <property type="term" value="P:proteolysis"/>
    <property type="evidence" value="ECO:0007669"/>
    <property type="project" value="UniProtKB-KW"/>
</dbReference>
<dbReference type="CDD" id="cd00433">
    <property type="entry name" value="Peptidase_M17"/>
    <property type="match status" value="1"/>
</dbReference>
<dbReference type="FunFam" id="3.40.220.10:FF:000001">
    <property type="entry name" value="Probable cytosol aminopeptidase"/>
    <property type="match status" value="1"/>
</dbReference>
<dbReference type="FunFam" id="3.40.630.10:FF:000004">
    <property type="entry name" value="Probable cytosol aminopeptidase"/>
    <property type="match status" value="1"/>
</dbReference>
<dbReference type="Gene3D" id="3.40.220.10">
    <property type="entry name" value="Leucine Aminopeptidase, subunit E, domain 1"/>
    <property type="match status" value="1"/>
</dbReference>
<dbReference type="Gene3D" id="3.40.630.10">
    <property type="entry name" value="Zn peptidases"/>
    <property type="match status" value="1"/>
</dbReference>
<dbReference type="HAMAP" id="MF_00181">
    <property type="entry name" value="Cytosol_peptidase_M17"/>
    <property type="match status" value="1"/>
</dbReference>
<dbReference type="InterPro" id="IPR011356">
    <property type="entry name" value="Leucine_aapep/pepB"/>
</dbReference>
<dbReference type="InterPro" id="IPR043472">
    <property type="entry name" value="Macro_dom-like"/>
</dbReference>
<dbReference type="InterPro" id="IPR000819">
    <property type="entry name" value="Peptidase_M17_C"/>
</dbReference>
<dbReference type="InterPro" id="IPR023042">
    <property type="entry name" value="Peptidase_M17_leu_NH2_pept"/>
</dbReference>
<dbReference type="InterPro" id="IPR008283">
    <property type="entry name" value="Peptidase_M17_N"/>
</dbReference>
<dbReference type="NCBIfam" id="NF002072">
    <property type="entry name" value="PRK00913.1-1"/>
    <property type="match status" value="1"/>
</dbReference>
<dbReference type="NCBIfam" id="NF002073">
    <property type="entry name" value="PRK00913.1-2"/>
    <property type="match status" value="1"/>
</dbReference>
<dbReference type="NCBIfam" id="NF002074">
    <property type="entry name" value="PRK00913.1-4"/>
    <property type="match status" value="1"/>
</dbReference>
<dbReference type="PANTHER" id="PTHR11963:SF23">
    <property type="entry name" value="CYTOSOL AMINOPEPTIDASE"/>
    <property type="match status" value="1"/>
</dbReference>
<dbReference type="PANTHER" id="PTHR11963">
    <property type="entry name" value="LEUCINE AMINOPEPTIDASE-RELATED"/>
    <property type="match status" value="1"/>
</dbReference>
<dbReference type="Pfam" id="PF00883">
    <property type="entry name" value="Peptidase_M17"/>
    <property type="match status" value="1"/>
</dbReference>
<dbReference type="Pfam" id="PF02789">
    <property type="entry name" value="Peptidase_M17_N"/>
    <property type="match status" value="1"/>
</dbReference>
<dbReference type="PRINTS" id="PR00481">
    <property type="entry name" value="LAMNOPPTDASE"/>
</dbReference>
<dbReference type="SUPFAM" id="SSF52949">
    <property type="entry name" value="Macro domain-like"/>
    <property type="match status" value="1"/>
</dbReference>
<dbReference type="SUPFAM" id="SSF53187">
    <property type="entry name" value="Zn-dependent exopeptidases"/>
    <property type="match status" value="1"/>
</dbReference>
<dbReference type="PROSITE" id="PS00631">
    <property type="entry name" value="CYTOSOL_AP"/>
    <property type="match status" value="1"/>
</dbReference>
<organism>
    <name type="scientific">Escherichia coli O8 (strain IAI1)</name>
    <dbReference type="NCBI Taxonomy" id="585034"/>
    <lineage>
        <taxon>Bacteria</taxon>
        <taxon>Pseudomonadati</taxon>
        <taxon>Pseudomonadota</taxon>
        <taxon>Gammaproteobacteria</taxon>
        <taxon>Enterobacterales</taxon>
        <taxon>Enterobacteriaceae</taxon>
        <taxon>Escherichia</taxon>
    </lineage>
</organism>
<sequence length="503" mass="54880">MEFSVKSGSPEKQRSACIVVGVFEPRRLSPIAEQLDKISDGYISALLRRGELEGKPGQTLLLHHVPNVLSERILLIGCGKERELDERQYKQVIQKTINTLNDTGSMEAVCFLTELHVKGRNNYWKVRQAVETAKETLYSFDQLKTNKSEPRRPLRKMVFNVPTRRELTSGERAIQHGLAIAAGIKAAKDLGNMPPNICNAAYLASQARQLADSYSKNVITRVIGEQQMKELGMHSYLAVGQGSQNESLMSVIEYKGNASEDARPIVLVGKGLTFDSGGISIKPSEGMDEMKYDMCGAAAVYGVMRMVAELQLPINVIGVLAGCENMPGGRAYRPGDVLTTMSGQTVEVLNTDAEGRLVLCDVLTYVERFEPEAVIDVATLTGACVIALGHHITGLMANHNPLAHELIAASEQSGDRAWRLPLGDEYQEQLESNFADMANIGGRPGGAITAGCFLSRFTRKYNWAHLDIAGTAWRSGKAKGATGRPVALLAQFLLNRAGFNGEE</sequence>
<proteinExistence type="inferred from homology"/>
<protein>
    <recommendedName>
        <fullName evidence="1">Probable cytosol aminopeptidase</fullName>
        <ecNumber evidence="1">3.4.11.1</ecNumber>
    </recommendedName>
    <alternativeName>
        <fullName evidence="1">Leucine aminopeptidase</fullName>
        <shortName evidence="1">LAP</shortName>
        <ecNumber evidence="1">3.4.11.10</ecNumber>
    </alternativeName>
    <alternativeName>
        <fullName evidence="1">Leucyl aminopeptidase</fullName>
    </alternativeName>
</protein>
<comment type="function">
    <text evidence="1">Presumably involved in the processing and regular turnover of intracellular proteins. Catalyzes the removal of unsubstituted N-terminal amino acids from various peptides.</text>
</comment>
<comment type="catalytic activity">
    <reaction evidence="1">
        <text>Release of an N-terminal amino acid, Xaa-|-Yaa-, in which Xaa is preferably Leu, but may be other amino acids including Pro although not Arg or Lys, and Yaa may be Pro. Amino acid amides and methyl esters are also readily hydrolyzed, but rates on arylamides are exceedingly low.</text>
        <dbReference type="EC" id="3.4.11.1"/>
    </reaction>
</comment>
<comment type="catalytic activity">
    <reaction evidence="1">
        <text>Release of an N-terminal amino acid, preferentially leucine, but not glutamic or aspartic acids.</text>
        <dbReference type="EC" id="3.4.11.10"/>
    </reaction>
</comment>
<comment type="cofactor">
    <cofactor evidence="1">
        <name>Mn(2+)</name>
        <dbReference type="ChEBI" id="CHEBI:29035"/>
    </cofactor>
    <text evidence="1">Binds 2 manganese ions per subunit.</text>
</comment>
<comment type="subcellular location">
    <subcellularLocation>
        <location evidence="1">Cytoplasm</location>
    </subcellularLocation>
</comment>
<comment type="similarity">
    <text evidence="1">Belongs to the peptidase M17 family.</text>
</comment>
<name>AMPA_ECO8A</name>
<reference key="1">
    <citation type="journal article" date="2009" name="PLoS Genet.">
        <title>Organised genome dynamics in the Escherichia coli species results in highly diverse adaptive paths.</title>
        <authorList>
            <person name="Touchon M."/>
            <person name="Hoede C."/>
            <person name="Tenaillon O."/>
            <person name="Barbe V."/>
            <person name="Baeriswyl S."/>
            <person name="Bidet P."/>
            <person name="Bingen E."/>
            <person name="Bonacorsi S."/>
            <person name="Bouchier C."/>
            <person name="Bouvet O."/>
            <person name="Calteau A."/>
            <person name="Chiapello H."/>
            <person name="Clermont O."/>
            <person name="Cruveiller S."/>
            <person name="Danchin A."/>
            <person name="Diard M."/>
            <person name="Dossat C."/>
            <person name="Karoui M.E."/>
            <person name="Frapy E."/>
            <person name="Garry L."/>
            <person name="Ghigo J.M."/>
            <person name="Gilles A.M."/>
            <person name="Johnson J."/>
            <person name="Le Bouguenec C."/>
            <person name="Lescat M."/>
            <person name="Mangenot S."/>
            <person name="Martinez-Jehanne V."/>
            <person name="Matic I."/>
            <person name="Nassif X."/>
            <person name="Oztas S."/>
            <person name="Petit M.A."/>
            <person name="Pichon C."/>
            <person name="Rouy Z."/>
            <person name="Ruf C.S."/>
            <person name="Schneider D."/>
            <person name="Tourret J."/>
            <person name="Vacherie B."/>
            <person name="Vallenet D."/>
            <person name="Medigue C."/>
            <person name="Rocha E.P.C."/>
            <person name="Denamur E."/>
        </authorList>
    </citation>
    <scope>NUCLEOTIDE SEQUENCE [LARGE SCALE GENOMIC DNA]</scope>
    <source>
        <strain>IAI1</strain>
    </source>
</reference>
<evidence type="ECO:0000255" key="1">
    <source>
        <dbReference type="HAMAP-Rule" id="MF_00181"/>
    </source>
</evidence>
<accession>B7M9L9</accession>
<keyword id="KW-0031">Aminopeptidase</keyword>
<keyword id="KW-0963">Cytoplasm</keyword>
<keyword id="KW-0378">Hydrolase</keyword>
<keyword id="KW-0464">Manganese</keyword>
<keyword id="KW-0479">Metal-binding</keyword>
<keyword id="KW-0645">Protease</keyword>